<proteinExistence type="inferred from homology"/>
<protein>
    <recommendedName>
        <fullName evidence="1">Argininosuccinate synthase</fullName>
        <ecNumber evidence="1">6.3.4.5</ecNumber>
    </recommendedName>
    <alternativeName>
        <fullName evidence="1">Citrulline--aspartate ligase</fullName>
    </alternativeName>
</protein>
<comment type="catalytic activity">
    <reaction evidence="1">
        <text>L-citrulline + L-aspartate + ATP = 2-(N(omega)-L-arginino)succinate + AMP + diphosphate + H(+)</text>
        <dbReference type="Rhea" id="RHEA:10932"/>
        <dbReference type="ChEBI" id="CHEBI:15378"/>
        <dbReference type="ChEBI" id="CHEBI:29991"/>
        <dbReference type="ChEBI" id="CHEBI:30616"/>
        <dbReference type="ChEBI" id="CHEBI:33019"/>
        <dbReference type="ChEBI" id="CHEBI:57472"/>
        <dbReference type="ChEBI" id="CHEBI:57743"/>
        <dbReference type="ChEBI" id="CHEBI:456215"/>
        <dbReference type="EC" id="6.3.4.5"/>
    </reaction>
</comment>
<comment type="pathway">
    <text evidence="1">Amino-acid biosynthesis; L-arginine biosynthesis; L-arginine from L-ornithine and carbamoyl phosphate: step 2/3.</text>
</comment>
<comment type="subunit">
    <text evidence="1">Homotetramer.</text>
</comment>
<comment type="subcellular location">
    <subcellularLocation>
        <location evidence="1">Cytoplasm</location>
    </subcellularLocation>
</comment>
<comment type="similarity">
    <text evidence="1">Belongs to the argininosuccinate synthase family. Type 1 subfamily.</text>
</comment>
<evidence type="ECO:0000255" key="1">
    <source>
        <dbReference type="HAMAP-Rule" id="MF_00005"/>
    </source>
</evidence>
<keyword id="KW-0028">Amino-acid biosynthesis</keyword>
<keyword id="KW-0055">Arginine biosynthesis</keyword>
<keyword id="KW-0067">ATP-binding</keyword>
<keyword id="KW-0963">Cytoplasm</keyword>
<keyword id="KW-0436">Ligase</keyword>
<keyword id="KW-0547">Nucleotide-binding</keyword>
<keyword id="KW-1185">Reference proteome</keyword>
<name>ASSY_MYCMM</name>
<sequence>MSERVILAYSGGLDTSVAISWIGKETGREVVAVAIDLGQGGEDMEVVRQRALDCGAVEAVVVDARDEFAEGYCLPTILNNALYMDRYPLVSAISRPLIVKHLVEAAREHGGGIVAHGCTGKGNDQVRFEVGFASLAPDLEVLAPVRDYAWTREKAIAFAEENAIPINVTKRSPFSIDQNVWGRAVETGFLEHLWNAPTKDVYSYTEDPTVNWNTPDEVIVGFERGMPVSIDGNAVTMLQAIEELNRRAGAQGVGRLDVVEDRLVGIKSREIYEAPGAMVLITAHAELEHVTLERELARFKRHTDQRWAELVYDGLWYSPLKTALESFVAKTQEHVSGEIRLVLHGGHIAVNGRRSAESLYDFNLATYDEGDTFDQSAAKGFVYVHGLSSKLSARRDLQ</sequence>
<accession>B2HR32</accession>
<dbReference type="EC" id="6.3.4.5" evidence="1"/>
<dbReference type="EMBL" id="CP000854">
    <property type="protein sequence ID" value="ACC40918.1"/>
    <property type="molecule type" value="Genomic_DNA"/>
</dbReference>
<dbReference type="RefSeq" id="WP_012394209.1">
    <property type="nucleotide sequence ID" value="NC_010612.1"/>
</dbReference>
<dbReference type="SMR" id="B2HR32"/>
<dbReference type="STRING" id="216594.MMAR_2468"/>
<dbReference type="GeneID" id="34343973"/>
<dbReference type="KEGG" id="mmi:MMAR_2468"/>
<dbReference type="eggNOG" id="COG0137">
    <property type="taxonomic scope" value="Bacteria"/>
</dbReference>
<dbReference type="HOGENOM" id="CLU_032784_4_2_11"/>
<dbReference type="OrthoDB" id="9801641at2"/>
<dbReference type="UniPathway" id="UPA00068">
    <property type="reaction ID" value="UER00113"/>
</dbReference>
<dbReference type="Proteomes" id="UP000001190">
    <property type="component" value="Chromosome"/>
</dbReference>
<dbReference type="GO" id="GO:0005737">
    <property type="term" value="C:cytoplasm"/>
    <property type="evidence" value="ECO:0007669"/>
    <property type="project" value="UniProtKB-SubCell"/>
</dbReference>
<dbReference type="GO" id="GO:0004055">
    <property type="term" value="F:argininosuccinate synthase activity"/>
    <property type="evidence" value="ECO:0007669"/>
    <property type="project" value="UniProtKB-UniRule"/>
</dbReference>
<dbReference type="GO" id="GO:0005524">
    <property type="term" value="F:ATP binding"/>
    <property type="evidence" value="ECO:0007669"/>
    <property type="project" value="UniProtKB-UniRule"/>
</dbReference>
<dbReference type="GO" id="GO:0000053">
    <property type="term" value="P:argininosuccinate metabolic process"/>
    <property type="evidence" value="ECO:0007669"/>
    <property type="project" value="TreeGrafter"/>
</dbReference>
<dbReference type="GO" id="GO:0006526">
    <property type="term" value="P:L-arginine biosynthetic process"/>
    <property type="evidence" value="ECO:0007669"/>
    <property type="project" value="UniProtKB-UniRule"/>
</dbReference>
<dbReference type="GO" id="GO:0000050">
    <property type="term" value="P:urea cycle"/>
    <property type="evidence" value="ECO:0007669"/>
    <property type="project" value="TreeGrafter"/>
</dbReference>
<dbReference type="CDD" id="cd01999">
    <property type="entry name" value="ASS"/>
    <property type="match status" value="1"/>
</dbReference>
<dbReference type="FunFam" id="3.40.50.620:FF:000038">
    <property type="entry name" value="Argininosuccinate synthase"/>
    <property type="match status" value="1"/>
</dbReference>
<dbReference type="FunFam" id="3.90.1260.10:FF:000006">
    <property type="entry name" value="Argininosuccinate synthase"/>
    <property type="match status" value="1"/>
</dbReference>
<dbReference type="Gene3D" id="3.90.1260.10">
    <property type="entry name" value="Argininosuccinate synthetase, chain A, domain 2"/>
    <property type="match status" value="1"/>
</dbReference>
<dbReference type="Gene3D" id="3.40.50.620">
    <property type="entry name" value="HUPs"/>
    <property type="match status" value="1"/>
</dbReference>
<dbReference type="Gene3D" id="1.20.5.470">
    <property type="entry name" value="Single helix bin"/>
    <property type="match status" value="1"/>
</dbReference>
<dbReference type="HAMAP" id="MF_00005">
    <property type="entry name" value="Arg_succ_synth_type1"/>
    <property type="match status" value="1"/>
</dbReference>
<dbReference type="InterPro" id="IPR048268">
    <property type="entry name" value="Arginosuc_syn_C"/>
</dbReference>
<dbReference type="InterPro" id="IPR048267">
    <property type="entry name" value="Arginosuc_syn_N"/>
</dbReference>
<dbReference type="InterPro" id="IPR001518">
    <property type="entry name" value="Arginosuc_synth"/>
</dbReference>
<dbReference type="InterPro" id="IPR018223">
    <property type="entry name" value="Arginosuc_synth_CS"/>
</dbReference>
<dbReference type="InterPro" id="IPR023434">
    <property type="entry name" value="Arginosuc_synth_type_1_subfam"/>
</dbReference>
<dbReference type="InterPro" id="IPR024074">
    <property type="entry name" value="AS_cat/multimer_dom_body"/>
</dbReference>
<dbReference type="InterPro" id="IPR014729">
    <property type="entry name" value="Rossmann-like_a/b/a_fold"/>
</dbReference>
<dbReference type="NCBIfam" id="TIGR00032">
    <property type="entry name" value="argG"/>
    <property type="match status" value="1"/>
</dbReference>
<dbReference type="NCBIfam" id="NF001770">
    <property type="entry name" value="PRK00509.1"/>
    <property type="match status" value="1"/>
</dbReference>
<dbReference type="PANTHER" id="PTHR11587">
    <property type="entry name" value="ARGININOSUCCINATE SYNTHASE"/>
    <property type="match status" value="1"/>
</dbReference>
<dbReference type="PANTHER" id="PTHR11587:SF2">
    <property type="entry name" value="ARGININOSUCCINATE SYNTHASE"/>
    <property type="match status" value="1"/>
</dbReference>
<dbReference type="Pfam" id="PF20979">
    <property type="entry name" value="Arginosuc_syn_C"/>
    <property type="match status" value="1"/>
</dbReference>
<dbReference type="Pfam" id="PF00764">
    <property type="entry name" value="Arginosuc_synth"/>
    <property type="match status" value="1"/>
</dbReference>
<dbReference type="SUPFAM" id="SSF52402">
    <property type="entry name" value="Adenine nucleotide alpha hydrolases-like"/>
    <property type="match status" value="1"/>
</dbReference>
<dbReference type="SUPFAM" id="SSF69864">
    <property type="entry name" value="Argininosuccinate synthetase, C-terminal domain"/>
    <property type="match status" value="1"/>
</dbReference>
<dbReference type="PROSITE" id="PS00564">
    <property type="entry name" value="ARGININOSUCCIN_SYN_1"/>
    <property type="match status" value="1"/>
</dbReference>
<dbReference type="PROSITE" id="PS00565">
    <property type="entry name" value="ARGININOSUCCIN_SYN_2"/>
    <property type="match status" value="1"/>
</dbReference>
<gene>
    <name evidence="1" type="primary">argG</name>
    <name type="ordered locus">MMAR_2468</name>
</gene>
<feature type="chain" id="PRO_1000089045" description="Argininosuccinate synthase">
    <location>
        <begin position="1"/>
        <end position="398"/>
    </location>
</feature>
<feature type="binding site" evidence="1">
    <location>
        <begin position="8"/>
        <end position="16"/>
    </location>
    <ligand>
        <name>ATP</name>
        <dbReference type="ChEBI" id="CHEBI:30616"/>
    </ligand>
</feature>
<feature type="binding site" evidence="1">
    <location>
        <position position="87"/>
    </location>
    <ligand>
        <name>L-citrulline</name>
        <dbReference type="ChEBI" id="CHEBI:57743"/>
    </ligand>
</feature>
<feature type="binding site" evidence="1">
    <location>
        <position position="117"/>
    </location>
    <ligand>
        <name>ATP</name>
        <dbReference type="ChEBI" id="CHEBI:30616"/>
    </ligand>
</feature>
<feature type="binding site" evidence="1">
    <location>
        <position position="119"/>
    </location>
    <ligand>
        <name>L-aspartate</name>
        <dbReference type="ChEBI" id="CHEBI:29991"/>
    </ligand>
</feature>
<feature type="binding site" evidence="1">
    <location>
        <position position="123"/>
    </location>
    <ligand>
        <name>L-aspartate</name>
        <dbReference type="ChEBI" id="CHEBI:29991"/>
    </ligand>
</feature>
<feature type="binding site" evidence="1">
    <location>
        <position position="123"/>
    </location>
    <ligand>
        <name>L-citrulline</name>
        <dbReference type="ChEBI" id="CHEBI:57743"/>
    </ligand>
</feature>
<feature type="binding site" evidence="1">
    <location>
        <position position="124"/>
    </location>
    <ligand>
        <name>L-aspartate</name>
        <dbReference type="ChEBI" id="CHEBI:29991"/>
    </ligand>
</feature>
<feature type="binding site" evidence="1">
    <location>
        <position position="127"/>
    </location>
    <ligand>
        <name>L-citrulline</name>
        <dbReference type="ChEBI" id="CHEBI:57743"/>
    </ligand>
</feature>
<feature type="binding site" evidence="1">
    <location>
        <position position="175"/>
    </location>
    <ligand>
        <name>L-citrulline</name>
        <dbReference type="ChEBI" id="CHEBI:57743"/>
    </ligand>
</feature>
<feature type="binding site" evidence="1">
    <location>
        <position position="260"/>
    </location>
    <ligand>
        <name>L-citrulline</name>
        <dbReference type="ChEBI" id="CHEBI:57743"/>
    </ligand>
</feature>
<feature type="binding site" evidence="1">
    <location>
        <position position="272"/>
    </location>
    <ligand>
        <name>L-citrulline</name>
        <dbReference type="ChEBI" id="CHEBI:57743"/>
    </ligand>
</feature>
<reference key="1">
    <citation type="journal article" date="2008" name="Genome Res.">
        <title>Insights from the complete genome sequence of Mycobacterium marinum on the evolution of Mycobacterium tuberculosis.</title>
        <authorList>
            <person name="Stinear T.P."/>
            <person name="Seemann T."/>
            <person name="Harrison P.F."/>
            <person name="Jenkin G.A."/>
            <person name="Davies J.K."/>
            <person name="Johnson P.D."/>
            <person name="Abdellah Z."/>
            <person name="Arrowsmith C."/>
            <person name="Chillingworth T."/>
            <person name="Churcher C."/>
            <person name="Clarke K."/>
            <person name="Cronin A."/>
            <person name="Davis P."/>
            <person name="Goodhead I."/>
            <person name="Holroyd N."/>
            <person name="Jagels K."/>
            <person name="Lord A."/>
            <person name="Moule S."/>
            <person name="Mungall K."/>
            <person name="Norbertczak H."/>
            <person name="Quail M.A."/>
            <person name="Rabbinowitsch E."/>
            <person name="Walker D."/>
            <person name="White B."/>
            <person name="Whitehead S."/>
            <person name="Small P.L."/>
            <person name="Brosch R."/>
            <person name="Ramakrishnan L."/>
            <person name="Fischbach M.A."/>
            <person name="Parkhill J."/>
            <person name="Cole S.T."/>
        </authorList>
    </citation>
    <scope>NUCLEOTIDE SEQUENCE [LARGE SCALE GENOMIC DNA]</scope>
    <source>
        <strain>ATCC BAA-535 / M</strain>
    </source>
</reference>
<organism>
    <name type="scientific">Mycobacterium marinum (strain ATCC BAA-535 / M)</name>
    <dbReference type="NCBI Taxonomy" id="216594"/>
    <lineage>
        <taxon>Bacteria</taxon>
        <taxon>Bacillati</taxon>
        <taxon>Actinomycetota</taxon>
        <taxon>Actinomycetes</taxon>
        <taxon>Mycobacteriales</taxon>
        <taxon>Mycobacteriaceae</taxon>
        <taxon>Mycobacterium</taxon>
        <taxon>Mycobacterium ulcerans group</taxon>
    </lineage>
</organism>